<proteinExistence type="inferred from homology"/>
<accession>A8FAF6</accession>
<gene>
    <name evidence="1" type="primary">rex</name>
    <name type="ordered locus">BPUM_0528</name>
</gene>
<dbReference type="EMBL" id="CP000813">
    <property type="protein sequence ID" value="ABV61223.1"/>
    <property type="molecule type" value="Genomic_DNA"/>
</dbReference>
<dbReference type="RefSeq" id="WP_012009076.1">
    <property type="nucleotide sequence ID" value="NZ_VEIS01000033.1"/>
</dbReference>
<dbReference type="SMR" id="A8FAF6"/>
<dbReference type="STRING" id="315750.BPUM_0528"/>
<dbReference type="GeneID" id="5619776"/>
<dbReference type="KEGG" id="bpu:BPUM_0528"/>
<dbReference type="eggNOG" id="COG2344">
    <property type="taxonomic scope" value="Bacteria"/>
</dbReference>
<dbReference type="HOGENOM" id="CLU_061534_1_1_9"/>
<dbReference type="OrthoDB" id="9784760at2"/>
<dbReference type="Proteomes" id="UP000001355">
    <property type="component" value="Chromosome"/>
</dbReference>
<dbReference type="GO" id="GO:0005737">
    <property type="term" value="C:cytoplasm"/>
    <property type="evidence" value="ECO:0007669"/>
    <property type="project" value="UniProtKB-SubCell"/>
</dbReference>
<dbReference type="GO" id="GO:0003677">
    <property type="term" value="F:DNA binding"/>
    <property type="evidence" value="ECO:0007669"/>
    <property type="project" value="UniProtKB-UniRule"/>
</dbReference>
<dbReference type="GO" id="GO:0003700">
    <property type="term" value="F:DNA-binding transcription factor activity"/>
    <property type="evidence" value="ECO:0007669"/>
    <property type="project" value="UniProtKB-UniRule"/>
</dbReference>
<dbReference type="GO" id="GO:0045892">
    <property type="term" value="P:negative regulation of DNA-templated transcription"/>
    <property type="evidence" value="ECO:0007669"/>
    <property type="project" value="InterPro"/>
</dbReference>
<dbReference type="GO" id="GO:0051775">
    <property type="term" value="P:response to redox state"/>
    <property type="evidence" value="ECO:0007669"/>
    <property type="project" value="InterPro"/>
</dbReference>
<dbReference type="Gene3D" id="3.40.50.720">
    <property type="entry name" value="NAD(P)-binding Rossmann-like Domain"/>
    <property type="match status" value="1"/>
</dbReference>
<dbReference type="Gene3D" id="1.10.10.10">
    <property type="entry name" value="Winged helix-like DNA-binding domain superfamily/Winged helix DNA-binding domain"/>
    <property type="match status" value="1"/>
</dbReference>
<dbReference type="HAMAP" id="MF_01131">
    <property type="entry name" value="Rex"/>
    <property type="match status" value="1"/>
</dbReference>
<dbReference type="InterPro" id="IPR003781">
    <property type="entry name" value="CoA-bd"/>
</dbReference>
<dbReference type="InterPro" id="IPR036291">
    <property type="entry name" value="NAD(P)-bd_dom_sf"/>
</dbReference>
<dbReference type="InterPro" id="IPR009718">
    <property type="entry name" value="Rex_DNA-bd_C_dom"/>
</dbReference>
<dbReference type="InterPro" id="IPR022876">
    <property type="entry name" value="Tscrpt_rep_Rex"/>
</dbReference>
<dbReference type="InterPro" id="IPR036388">
    <property type="entry name" value="WH-like_DNA-bd_sf"/>
</dbReference>
<dbReference type="InterPro" id="IPR036390">
    <property type="entry name" value="WH_DNA-bd_sf"/>
</dbReference>
<dbReference type="NCBIfam" id="NF003989">
    <property type="entry name" value="PRK05472.1-3"/>
    <property type="match status" value="1"/>
</dbReference>
<dbReference type="NCBIfam" id="NF003991">
    <property type="entry name" value="PRK05472.1-5"/>
    <property type="match status" value="1"/>
</dbReference>
<dbReference type="NCBIfam" id="NF003994">
    <property type="entry name" value="PRK05472.2-3"/>
    <property type="match status" value="1"/>
</dbReference>
<dbReference type="NCBIfam" id="NF003995">
    <property type="entry name" value="PRK05472.2-4"/>
    <property type="match status" value="1"/>
</dbReference>
<dbReference type="NCBIfam" id="NF003996">
    <property type="entry name" value="PRK05472.2-5"/>
    <property type="match status" value="1"/>
</dbReference>
<dbReference type="PANTHER" id="PTHR35786">
    <property type="entry name" value="REDOX-SENSING TRANSCRIPTIONAL REPRESSOR REX"/>
    <property type="match status" value="1"/>
</dbReference>
<dbReference type="PANTHER" id="PTHR35786:SF1">
    <property type="entry name" value="REDOX-SENSING TRANSCRIPTIONAL REPRESSOR REX 1"/>
    <property type="match status" value="1"/>
</dbReference>
<dbReference type="Pfam" id="PF02629">
    <property type="entry name" value="CoA_binding"/>
    <property type="match status" value="1"/>
</dbReference>
<dbReference type="Pfam" id="PF06971">
    <property type="entry name" value="Put_DNA-bind_N"/>
    <property type="match status" value="1"/>
</dbReference>
<dbReference type="SMART" id="SM00881">
    <property type="entry name" value="CoA_binding"/>
    <property type="match status" value="1"/>
</dbReference>
<dbReference type="SUPFAM" id="SSF51735">
    <property type="entry name" value="NAD(P)-binding Rossmann-fold domains"/>
    <property type="match status" value="1"/>
</dbReference>
<dbReference type="SUPFAM" id="SSF46785">
    <property type="entry name" value="Winged helix' DNA-binding domain"/>
    <property type="match status" value="1"/>
</dbReference>
<evidence type="ECO:0000255" key="1">
    <source>
        <dbReference type="HAMAP-Rule" id="MF_01131"/>
    </source>
</evidence>
<keyword id="KW-0963">Cytoplasm</keyword>
<keyword id="KW-0238">DNA-binding</keyword>
<keyword id="KW-0520">NAD</keyword>
<keyword id="KW-0678">Repressor</keyword>
<keyword id="KW-0804">Transcription</keyword>
<keyword id="KW-0805">Transcription regulation</keyword>
<feature type="chain" id="PRO_1000065390" description="Redox-sensing transcriptional repressor Rex">
    <location>
        <begin position="1"/>
        <end position="217"/>
    </location>
</feature>
<feature type="DNA-binding region" description="H-T-H motif" evidence="1">
    <location>
        <begin position="18"/>
        <end position="57"/>
    </location>
</feature>
<feature type="binding site" evidence="1">
    <location>
        <begin position="92"/>
        <end position="97"/>
    </location>
    <ligand>
        <name>NAD(+)</name>
        <dbReference type="ChEBI" id="CHEBI:57540"/>
    </ligand>
</feature>
<reference key="1">
    <citation type="journal article" date="2007" name="PLoS ONE">
        <title>Paradoxical DNA repair and peroxide resistance gene conservation in Bacillus pumilus SAFR-032.</title>
        <authorList>
            <person name="Gioia J."/>
            <person name="Yerrapragada S."/>
            <person name="Qin X."/>
            <person name="Jiang H."/>
            <person name="Igboeli O.C."/>
            <person name="Muzny D."/>
            <person name="Dugan-Rocha S."/>
            <person name="Ding Y."/>
            <person name="Hawes A."/>
            <person name="Liu W."/>
            <person name="Perez L."/>
            <person name="Kovar C."/>
            <person name="Dinh H."/>
            <person name="Lee S."/>
            <person name="Nazareth L."/>
            <person name="Blyth P."/>
            <person name="Holder M."/>
            <person name="Buhay C."/>
            <person name="Tirumalai M.R."/>
            <person name="Liu Y."/>
            <person name="Dasgupta I."/>
            <person name="Bokhetache L."/>
            <person name="Fujita M."/>
            <person name="Karouia F."/>
            <person name="Eswara Moorthy P."/>
            <person name="Siefert J."/>
            <person name="Uzman A."/>
            <person name="Buzumbo P."/>
            <person name="Verma A."/>
            <person name="Zwiya H."/>
            <person name="McWilliams B.D."/>
            <person name="Olowu A."/>
            <person name="Clinkenbeard K.D."/>
            <person name="Newcombe D."/>
            <person name="Golebiewski L."/>
            <person name="Petrosino J.F."/>
            <person name="Nicholson W.L."/>
            <person name="Fox G.E."/>
            <person name="Venkateswaran K."/>
            <person name="Highlander S.K."/>
            <person name="Weinstock G.M."/>
        </authorList>
    </citation>
    <scope>NUCLEOTIDE SEQUENCE [LARGE SCALE GENOMIC DNA]</scope>
    <source>
        <strain>SAFR-032</strain>
    </source>
</reference>
<name>REX_BACP2</name>
<protein>
    <recommendedName>
        <fullName evidence="1">Redox-sensing transcriptional repressor Rex</fullName>
    </recommendedName>
</protein>
<organism>
    <name type="scientific">Bacillus pumilus (strain SAFR-032)</name>
    <dbReference type="NCBI Taxonomy" id="315750"/>
    <lineage>
        <taxon>Bacteria</taxon>
        <taxon>Bacillati</taxon>
        <taxon>Bacillota</taxon>
        <taxon>Bacilli</taxon>
        <taxon>Bacillales</taxon>
        <taxon>Bacillaceae</taxon>
        <taxon>Bacillus</taxon>
    </lineage>
</organism>
<comment type="function">
    <text evidence="1">Modulates transcription in response to changes in cellular NADH/NAD(+) redox state.</text>
</comment>
<comment type="subunit">
    <text evidence="1">Homodimer.</text>
</comment>
<comment type="subcellular location">
    <subcellularLocation>
        <location evidence="1">Cytoplasm</location>
    </subcellularLocation>
</comment>
<comment type="similarity">
    <text evidence="1">Belongs to the transcriptional regulatory Rex family.</text>
</comment>
<sequence>MNIDQSKIPQATAKRLPLYYRFLKNLHASGKQRVSSAELSDAVKVDSATIRRDFSYFGALGKKGYGYNVDYLLTFFRKTLDQDEMTNVMLIGVGNLGTAFLHYNFIKNNNTKISMAFDVNESKIGSEIGGVPVYDLDKLEEHVQEVGDIPVAILTVPAVAAQPITDRLIALGIKGILNFTPARLNVPEHIRIHHIDLAVELQSLVYFLKHYSITQED</sequence>